<reference key="1">
    <citation type="journal article" date="2004" name="Nat. Genet.">
        <title>Complete sequencing and characterization of 21,243 full-length human cDNAs.</title>
        <authorList>
            <person name="Ota T."/>
            <person name="Suzuki Y."/>
            <person name="Nishikawa T."/>
            <person name="Otsuki T."/>
            <person name="Sugiyama T."/>
            <person name="Irie R."/>
            <person name="Wakamatsu A."/>
            <person name="Hayashi K."/>
            <person name="Sato H."/>
            <person name="Nagai K."/>
            <person name="Kimura K."/>
            <person name="Makita H."/>
            <person name="Sekine M."/>
            <person name="Obayashi M."/>
            <person name="Nishi T."/>
            <person name="Shibahara T."/>
            <person name="Tanaka T."/>
            <person name="Ishii S."/>
            <person name="Yamamoto J."/>
            <person name="Saito K."/>
            <person name="Kawai Y."/>
            <person name="Isono Y."/>
            <person name="Nakamura Y."/>
            <person name="Nagahari K."/>
            <person name="Murakami K."/>
            <person name="Yasuda T."/>
            <person name="Iwayanagi T."/>
            <person name="Wagatsuma M."/>
            <person name="Shiratori A."/>
            <person name="Sudo H."/>
            <person name="Hosoiri T."/>
            <person name="Kaku Y."/>
            <person name="Kodaira H."/>
            <person name="Kondo H."/>
            <person name="Sugawara M."/>
            <person name="Takahashi M."/>
            <person name="Kanda K."/>
            <person name="Yokoi T."/>
            <person name="Furuya T."/>
            <person name="Kikkawa E."/>
            <person name="Omura Y."/>
            <person name="Abe K."/>
            <person name="Kamihara K."/>
            <person name="Katsuta N."/>
            <person name="Sato K."/>
            <person name="Tanikawa M."/>
            <person name="Yamazaki M."/>
            <person name="Ninomiya K."/>
            <person name="Ishibashi T."/>
            <person name="Yamashita H."/>
            <person name="Murakawa K."/>
            <person name="Fujimori K."/>
            <person name="Tanai H."/>
            <person name="Kimata M."/>
            <person name="Watanabe M."/>
            <person name="Hiraoka S."/>
            <person name="Chiba Y."/>
            <person name="Ishida S."/>
            <person name="Ono Y."/>
            <person name="Takiguchi S."/>
            <person name="Watanabe S."/>
            <person name="Yosida M."/>
            <person name="Hotuta T."/>
            <person name="Kusano J."/>
            <person name="Kanehori K."/>
            <person name="Takahashi-Fujii A."/>
            <person name="Hara H."/>
            <person name="Tanase T.-O."/>
            <person name="Nomura Y."/>
            <person name="Togiya S."/>
            <person name="Komai F."/>
            <person name="Hara R."/>
            <person name="Takeuchi K."/>
            <person name="Arita M."/>
            <person name="Imose N."/>
            <person name="Musashino K."/>
            <person name="Yuuki H."/>
            <person name="Oshima A."/>
            <person name="Sasaki N."/>
            <person name="Aotsuka S."/>
            <person name="Yoshikawa Y."/>
            <person name="Matsunawa H."/>
            <person name="Ichihara T."/>
            <person name="Shiohata N."/>
            <person name="Sano S."/>
            <person name="Moriya S."/>
            <person name="Momiyama H."/>
            <person name="Satoh N."/>
            <person name="Takami S."/>
            <person name="Terashima Y."/>
            <person name="Suzuki O."/>
            <person name="Nakagawa S."/>
            <person name="Senoh A."/>
            <person name="Mizoguchi H."/>
            <person name="Goto Y."/>
            <person name="Shimizu F."/>
            <person name="Wakebe H."/>
            <person name="Hishigaki H."/>
            <person name="Watanabe T."/>
            <person name="Sugiyama A."/>
            <person name="Takemoto M."/>
            <person name="Kawakami B."/>
            <person name="Yamazaki M."/>
            <person name="Watanabe K."/>
            <person name="Kumagai A."/>
            <person name="Itakura S."/>
            <person name="Fukuzumi Y."/>
            <person name="Fujimori Y."/>
            <person name="Komiyama M."/>
            <person name="Tashiro H."/>
            <person name="Tanigami A."/>
            <person name="Fujiwara T."/>
            <person name="Ono T."/>
            <person name="Yamada K."/>
            <person name="Fujii Y."/>
            <person name="Ozaki K."/>
            <person name="Hirao M."/>
            <person name="Ohmori Y."/>
            <person name="Kawabata A."/>
            <person name="Hikiji T."/>
            <person name="Kobatake N."/>
            <person name="Inagaki H."/>
            <person name="Ikema Y."/>
            <person name="Okamoto S."/>
            <person name="Okitani R."/>
            <person name="Kawakami T."/>
            <person name="Noguchi S."/>
            <person name="Itoh T."/>
            <person name="Shigeta K."/>
            <person name="Senba T."/>
            <person name="Matsumura K."/>
            <person name="Nakajima Y."/>
            <person name="Mizuno T."/>
            <person name="Morinaga M."/>
            <person name="Sasaki M."/>
            <person name="Togashi T."/>
            <person name="Oyama M."/>
            <person name="Hata H."/>
            <person name="Watanabe M."/>
            <person name="Komatsu T."/>
            <person name="Mizushima-Sugano J."/>
            <person name="Satoh T."/>
            <person name="Shirai Y."/>
            <person name="Takahashi Y."/>
            <person name="Nakagawa K."/>
            <person name="Okumura K."/>
            <person name="Nagase T."/>
            <person name="Nomura N."/>
            <person name="Kikuchi H."/>
            <person name="Masuho Y."/>
            <person name="Yamashita R."/>
            <person name="Nakai K."/>
            <person name="Yada T."/>
            <person name="Nakamura Y."/>
            <person name="Ohara O."/>
            <person name="Isogai T."/>
            <person name="Sugano S."/>
        </authorList>
    </citation>
    <scope>NUCLEOTIDE SEQUENCE [LARGE SCALE MRNA]</scope>
    <source>
        <tissue>Brain</tissue>
    </source>
</reference>
<reference key="2">
    <citation type="journal article" date="2006" name="Nature">
        <title>The DNA sequence and biological annotation of human chromosome 1.</title>
        <authorList>
            <person name="Gregory S.G."/>
            <person name="Barlow K.F."/>
            <person name="McLay K.E."/>
            <person name="Kaul R."/>
            <person name="Swarbreck D."/>
            <person name="Dunham A."/>
            <person name="Scott C.E."/>
            <person name="Howe K.L."/>
            <person name="Woodfine K."/>
            <person name="Spencer C.C.A."/>
            <person name="Jones M.C."/>
            <person name="Gillson C."/>
            <person name="Searle S."/>
            <person name="Zhou Y."/>
            <person name="Kokocinski F."/>
            <person name="McDonald L."/>
            <person name="Evans R."/>
            <person name="Phillips K."/>
            <person name="Atkinson A."/>
            <person name="Cooper R."/>
            <person name="Jones C."/>
            <person name="Hall R.E."/>
            <person name="Andrews T.D."/>
            <person name="Lloyd C."/>
            <person name="Ainscough R."/>
            <person name="Almeida J.P."/>
            <person name="Ambrose K.D."/>
            <person name="Anderson F."/>
            <person name="Andrew R.W."/>
            <person name="Ashwell R.I.S."/>
            <person name="Aubin K."/>
            <person name="Babbage A.K."/>
            <person name="Bagguley C.L."/>
            <person name="Bailey J."/>
            <person name="Beasley H."/>
            <person name="Bethel G."/>
            <person name="Bird C.P."/>
            <person name="Bray-Allen S."/>
            <person name="Brown J.Y."/>
            <person name="Brown A.J."/>
            <person name="Buckley D."/>
            <person name="Burton J."/>
            <person name="Bye J."/>
            <person name="Carder C."/>
            <person name="Chapman J.C."/>
            <person name="Clark S.Y."/>
            <person name="Clarke G."/>
            <person name="Clee C."/>
            <person name="Cobley V."/>
            <person name="Collier R.E."/>
            <person name="Corby N."/>
            <person name="Coville G.J."/>
            <person name="Davies J."/>
            <person name="Deadman R."/>
            <person name="Dunn M."/>
            <person name="Earthrowl M."/>
            <person name="Ellington A.G."/>
            <person name="Errington H."/>
            <person name="Frankish A."/>
            <person name="Frankland J."/>
            <person name="French L."/>
            <person name="Garner P."/>
            <person name="Garnett J."/>
            <person name="Gay L."/>
            <person name="Ghori M.R.J."/>
            <person name="Gibson R."/>
            <person name="Gilby L.M."/>
            <person name="Gillett W."/>
            <person name="Glithero R.J."/>
            <person name="Grafham D.V."/>
            <person name="Griffiths C."/>
            <person name="Griffiths-Jones S."/>
            <person name="Grocock R."/>
            <person name="Hammond S."/>
            <person name="Harrison E.S.I."/>
            <person name="Hart E."/>
            <person name="Haugen E."/>
            <person name="Heath P.D."/>
            <person name="Holmes S."/>
            <person name="Holt K."/>
            <person name="Howden P.J."/>
            <person name="Hunt A.R."/>
            <person name="Hunt S.E."/>
            <person name="Hunter G."/>
            <person name="Isherwood J."/>
            <person name="James R."/>
            <person name="Johnson C."/>
            <person name="Johnson D."/>
            <person name="Joy A."/>
            <person name="Kay M."/>
            <person name="Kershaw J.K."/>
            <person name="Kibukawa M."/>
            <person name="Kimberley A.M."/>
            <person name="King A."/>
            <person name="Knights A.J."/>
            <person name="Lad H."/>
            <person name="Laird G."/>
            <person name="Lawlor S."/>
            <person name="Leongamornlert D.A."/>
            <person name="Lloyd D.M."/>
            <person name="Loveland J."/>
            <person name="Lovell J."/>
            <person name="Lush M.J."/>
            <person name="Lyne R."/>
            <person name="Martin S."/>
            <person name="Mashreghi-Mohammadi M."/>
            <person name="Matthews L."/>
            <person name="Matthews N.S.W."/>
            <person name="McLaren S."/>
            <person name="Milne S."/>
            <person name="Mistry S."/>
            <person name="Moore M.J.F."/>
            <person name="Nickerson T."/>
            <person name="O'Dell C.N."/>
            <person name="Oliver K."/>
            <person name="Palmeiri A."/>
            <person name="Palmer S.A."/>
            <person name="Parker A."/>
            <person name="Patel D."/>
            <person name="Pearce A.V."/>
            <person name="Peck A.I."/>
            <person name="Pelan S."/>
            <person name="Phelps K."/>
            <person name="Phillimore B.J."/>
            <person name="Plumb R."/>
            <person name="Rajan J."/>
            <person name="Raymond C."/>
            <person name="Rouse G."/>
            <person name="Saenphimmachak C."/>
            <person name="Sehra H.K."/>
            <person name="Sheridan E."/>
            <person name="Shownkeen R."/>
            <person name="Sims S."/>
            <person name="Skuce C.D."/>
            <person name="Smith M."/>
            <person name="Steward C."/>
            <person name="Subramanian S."/>
            <person name="Sycamore N."/>
            <person name="Tracey A."/>
            <person name="Tromans A."/>
            <person name="Van Helmond Z."/>
            <person name="Wall M."/>
            <person name="Wallis J.M."/>
            <person name="White S."/>
            <person name="Whitehead S.L."/>
            <person name="Wilkinson J.E."/>
            <person name="Willey D.L."/>
            <person name="Williams H."/>
            <person name="Wilming L."/>
            <person name="Wray P.W."/>
            <person name="Wu Z."/>
            <person name="Coulson A."/>
            <person name="Vaudin M."/>
            <person name="Sulston J.E."/>
            <person name="Durbin R.M."/>
            <person name="Hubbard T."/>
            <person name="Wooster R."/>
            <person name="Dunham I."/>
            <person name="Carter N.P."/>
            <person name="McVean G."/>
            <person name="Ross M.T."/>
            <person name="Harrow J."/>
            <person name="Olson M.V."/>
            <person name="Beck S."/>
            <person name="Rogers J."/>
            <person name="Bentley D.R."/>
        </authorList>
    </citation>
    <scope>NUCLEOTIDE SEQUENCE [LARGE SCALE GENOMIC DNA]</scope>
</reference>
<reference key="3">
    <citation type="journal article" date="2004" name="Genome Res.">
        <title>The status, quality, and expansion of the NIH full-length cDNA project: the Mammalian Gene Collection (MGC).</title>
        <authorList>
            <consortium name="The MGC Project Team"/>
        </authorList>
    </citation>
    <scope>NUCLEOTIDE SEQUENCE [LARGE SCALE MRNA]</scope>
    <source>
        <tissue>Brain</tissue>
    </source>
</reference>
<reference key="4">
    <citation type="journal article" date="2009" name="Mol. Cell. Proteomics">
        <title>Large-scale proteomics analysis of the human kinome.</title>
        <authorList>
            <person name="Oppermann F.S."/>
            <person name="Gnad F."/>
            <person name="Olsen J.V."/>
            <person name="Hornberger R."/>
            <person name="Greff Z."/>
            <person name="Keri G."/>
            <person name="Mann M."/>
            <person name="Daub H."/>
        </authorList>
    </citation>
    <scope>PHOSPHORYLATION [LARGE SCALE ANALYSIS] AT SER-213</scope>
    <scope>IDENTIFICATION BY MASS SPECTROMETRY [LARGE SCALE ANALYSIS]</scope>
</reference>
<reference key="5">
    <citation type="journal article" date="2010" name="J. Immunol.">
        <title>Chromosome 1 open reading frame 190 promotes activation of NF-kappaB canonical pathway and resistance of dendritic cells to tumor-associated inhibition in vitro.</title>
        <authorList>
            <person name="Jing Z."/>
            <person name="Yuan X."/>
            <person name="Zhang J."/>
            <person name="Huang X."/>
            <person name="Zhang Z."/>
            <person name="Liu J."/>
            <person name="Zhang M."/>
            <person name="Oyang J."/>
            <person name="Zhang Y."/>
            <person name="Zhang Z."/>
            <person name="Yang R."/>
        </authorList>
    </citation>
    <scope>FUNCTION</scope>
    <scope>SUBCELLULAR LOCATION</scope>
</reference>
<evidence type="ECO:0000250" key="1">
    <source>
        <dbReference type="UniProtKB" id="D4A8G3"/>
    </source>
</evidence>
<evidence type="ECO:0000250" key="2">
    <source>
        <dbReference type="UniProtKB" id="Q9D6I9"/>
    </source>
</evidence>
<evidence type="ECO:0000256" key="3">
    <source>
        <dbReference type="SAM" id="MobiDB-lite"/>
    </source>
</evidence>
<evidence type="ECO:0000269" key="4">
    <source>
    </source>
</evidence>
<evidence type="ECO:0007744" key="5">
    <source>
    </source>
</evidence>
<accession>Q96LR2</accession>
<keyword id="KW-0963">Cytoplasm</keyword>
<keyword id="KW-0433">Leucine-rich repeat</keyword>
<keyword id="KW-0597">Phosphoprotein</keyword>
<keyword id="KW-1267">Proteomics identification</keyword>
<keyword id="KW-1185">Reference proteome</keyword>
<keyword id="KW-0677">Repeat</keyword>
<proteinExistence type="evidence at protein level"/>
<gene>
    <name type="primary">LURAP1</name>
    <name type="synonym">C1orf190</name>
    <name type="synonym">LRAP35A</name>
    <name type="synonym">LRP35A</name>
</gene>
<organism>
    <name type="scientific">Homo sapiens</name>
    <name type="common">Human</name>
    <dbReference type="NCBI Taxonomy" id="9606"/>
    <lineage>
        <taxon>Eukaryota</taxon>
        <taxon>Metazoa</taxon>
        <taxon>Chordata</taxon>
        <taxon>Craniata</taxon>
        <taxon>Vertebrata</taxon>
        <taxon>Euteleostomi</taxon>
        <taxon>Mammalia</taxon>
        <taxon>Eutheria</taxon>
        <taxon>Euarchontoglires</taxon>
        <taxon>Primates</taxon>
        <taxon>Haplorrhini</taxon>
        <taxon>Catarrhini</taxon>
        <taxon>Hominidae</taxon>
        <taxon>Homo</taxon>
    </lineage>
</organism>
<feature type="chain" id="PRO_0000271078" description="Leucine rich adaptor protein 1">
    <location>
        <begin position="1"/>
        <end position="239"/>
    </location>
</feature>
<feature type="repeat" description="LRR 1">
    <location>
        <begin position="55"/>
        <end position="83"/>
    </location>
</feature>
<feature type="repeat" description="LRR 2">
    <location>
        <begin position="93"/>
        <end position="114"/>
    </location>
</feature>
<feature type="region of interest" description="Disordered" evidence="3">
    <location>
        <begin position="107"/>
        <end position="139"/>
    </location>
</feature>
<feature type="region of interest" description="Disordered" evidence="3">
    <location>
        <begin position="200"/>
        <end position="219"/>
    </location>
</feature>
<feature type="compositionally biased region" description="Low complexity" evidence="3">
    <location>
        <begin position="107"/>
        <end position="116"/>
    </location>
</feature>
<feature type="modified residue" description="Phosphoserine" evidence="2">
    <location>
        <position position="118"/>
    </location>
</feature>
<feature type="modified residue" description="Phosphoserine" evidence="2">
    <location>
        <position position="126"/>
    </location>
</feature>
<feature type="modified residue" description="Phosphoserine" evidence="1">
    <location>
        <position position="129"/>
    </location>
</feature>
<feature type="modified residue" description="Phosphoserine" evidence="5">
    <location>
        <position position="213"/>
    </location>
</feature>
<protein>
    <recommendedName>
        <fullName>Leucine rich adaptor protein 1</fullName>
    </recommendedName>
    <alternativeName>
        <fullName>Leucine repeat adapter protein 35A</fullName>
    </alternativeName>
</protein>
<comment type="function">
    <text evidence="1 4">Acts as an activator of the canonical NF-kappa-B pathway and drive the production of pro-inflammatory cytokines. Promotes the antigen (Ag)-presenting and priming function of dendritic cells via the canonical NF-kappa-B pathway (PubMed:21048106). In concert with MYO18A and CDC42BPA/CDC42BPB, is involved in modulating lamellar actomyosin retrograde flow that is crucial to cell protrusion and migration. Activates CDC42BPA/CDC42BPB and targets it to actomyosin through its interaction with MYO18A, leading to MYL9/MLC2 phosphorylation and MYH9/MYH10-dependent actomyosin assembly in the lamella (By similarity).</text>
</comment>
<comment type="subunit">
    <text evidence="1">Forms a tripartite complex with CDC42BPA/CDC42BPB and MYO18A acting as an adapter connecting both. Its binding to CDC42BPA/CDC42BPB results in their activation by abolition of their negative autoregulation. Interacts with CDC42BPA and CDC42BPB.</text>
</comment>
<comment type="interaction">
    <interactant intactId="EBI-741355">
        <id>Q96LR2</id>
    </interactant>
    <interactant intactId="EBI-11096309">
        <id>Q9NYB9-2</id>
        <label>ABI2</label>
    </interactant>
    <organismsDiffer>false</organismsDiffer>
    <experiments>3</experiments>
</comment>
<comment type="interaction">
    <interactant intactId="EBI-741355">
        <id>Q96LR2</id>
    </interactant>
    <interactant intactId="EBI-17286414">
        <id>A2BDD9</id>
        <label>AMOT</label>
    </interactant>
    <organismsDiffer>false</organismsDiffer>
    <experiments>5</experiments>
</comment>
<comment type="interaction">
    <interactant intactId="EBI-741355">
        <id>Q96LR2</id>
    </interactant>
    <interactant intactId="EBI-3891843">
        <id>Q4VCS5-2</id>
        <label>AMOT</label>
    </interactant>
    <organismsDiffer>false</organismsDiffer>
    <experiments>3</experiments>
</comment>
<comment type="interaction">
    <interactant intactId="EBI-741355">
        <id>Q96LR2</id>
    </interactant>
    <interactant intactId="EBI-751621">
        <id>P48730</id>
        <label>CSNK1D</label>
    </interactant>
    <organismsDiffer>false</organismsDiffer>
    <experiments>4</experiments>
</comment>
<comment type="interaction">
    <interactant intactId="EBI-741355">
        <id>Q96LR2</id>
    </interactant>
    <interactant intactId="EBI-12593112">
        <id>O75190-2</id>
        <label>DNAJB6</label>
    </interactant>
    <organismsDiffer>false</organismsDiffer>
    <experiments>3</experiments>
</comment>
<comment type="interaction">
    <interactant intactId="EBI-741355">
        <id>Q96LR2</id>
    </interactant>
    <interactant intactId="EBI-11984733">
        <id>O60941-5</id>
        <label>DTNB</label>
    </interactant>
    <organismsDiffer>false</organismsDiffer>
    <experiments>5</experiments>
</comment>
<comment type="interaction">
    <interactant intactId="EBI-741355">
        <id>Q96LR2</id>
    </interactant>
    <interactant intactId="EBI-744099">
        <id>Q9H0I2</id>
        <label>ENKD1</label>
    </interactant>
    <organismsDiffer>false</organismsDiffer>
    <experiments>3</experiments>
</comment>
<comment type="interaction">
    <interactant intactId="EBI-741355">
        <id>Q96LR2</id>
    </interactant>
    <interactant intactId="EBI-348399">
        <id>P22607</id>
        <label>FGFR3</label>
    </interactant>
    <organismsDiffer>false</organismsDiffer>
    <experiments>3</experiments>
</comment>
<comment type="interaction">
    <interactant intactId="EBI-741355">
        <id>Q96LR2</id>
    </interactant>
    <interactant intactId="EBI-8285963">
        <id>Q14957</id>
        <label>GRIN2C</label>
    </interactant>
    <organismsDiffer>false</organismsDiffer>
    <experiments>3</experiments>
</comment>
<comment type="interaction">
    <interactant intactId="EBI-741355">
        <id>Q96LR2</id>
    </interactant>
    <interactant intactId="EBI-351506">
        <id>P06396</id>
        <label>GSN</label>
    </interactant>
    <organismsDiffer>false</organismsDiffer>
    <experiments>3</experiments>
</comment>
<comment type="interaction">
    <interactant intactId="EBI-741355">
        <id>Q96LR2</id>
    </interactant>
    <interactant intactId="EBI-2514791">
        <id>Q96CS2</id>
        <label>HAUS1</label>
    </interactant>
    <organismsDiffer>false</organismsDiffer>
    <experiments>4</experiments>
</comment>
<comment type="interaction">
    <interactant intactId="EBI-741355">
        <id>Q96LR2</id>
    </interactant>
    <interactant intactId="EBI-740220">
        <id>O14964</id>
        <label>HGS</label>
    </interactant>
    <organismsDiffer>false</organismsDiffer>
    <experiments>4</experiments>
</comment>
<comment type="interaction">
    <interactant intactId="EBI-741355">
        <id>Q96LR2</id>
    </interactant>
    <interactant intactId="EBI-740641">
        <id>Q9NP66</id>
        <label>HMG20A</label>
    </interactant>
    <organismsDiffer>false</organismsDiffer>
    <experiments>5</experiments>
</comment>
<comment type="interaction">
    <interactant intactId="EBI-741355">
        <id>Q96LR2</id>
    </interactant>
    <interactant intactId="EBI-350145">
        <id>P01112</id>
        <label>HRAS</label>
    </interactant>
    <organismsDiffer>false</organismsDiffer>
    <experiments>3</experiments>
</comment>
<comment type="interaction">
    <interactant intactId="EBI-741355">
        <id>Q96LR2</id>
    </interactant>
    <interactant intactId="EBI-948266">
        <id>O14901</id>
        <label>KLF11</label>
    </interactant>
    <organismsDiffer>false</organismsDiffer>
    <experiments>3</experiments>
</comment>
<comment type="interaction">
    <interactant intactId="EBI-741355">
        <id>Q96LR2</id>
    </interactant>
    <interactant intactId="EBI-2430095">
        <id>P12035</id>
        <label>KRT3</label>
    </interactant>
    <organismsDiffer>false</organismsDiffer>
    <experiments>3</experiments>
</comment>
<comment type="interaction">
    <interactant intactId="EBI-741355">
        <id>Q96LR2</id>
    </interactant>
    <interactant intactId="EBI-1567797">
        <id>Q8WWY3</id>
        <label>PRPF31</label>
    </interactant>
    <organismsDiffer>false</organismsDiffer>
    <experiments>6</experiments>
</comment>
<comment type="interaction">
    <interactant intactId="EBI-741355">
        <id>Q96LR2</id>
    </interactant>
    <interactant intactId="EBI-11955083">
        <id>Q9NUL5-4</id>
        <label>SHFL</label>
    </interactant>
    <organismsDiffer>false</organismsDiffer>
    <experiments>3</experiments>
</comment>
<comment type="interaction">
    <interactant intactId="EBI-741355">
        <id>Q96LR2</id>
    </interactant>
    <interactant intactId="EBI-355607">
        <id>P06753</id>
        <label>TPM3</label>
    </interactant>
    <organismsDiffer>false</organismsDiffer>
    <experiments>4</experiments>
</comment>
<comment type="interaction">
    <interactant intactId="EBI-741355">
        <id>Q96LR2</id>
    </interactant>
    <interactant intactId="EBI-6116822">
        <id>Q8N3L3</id>
        <label>TXLNB</label>
    </interactant>
    <organismsDiffer>false</organismsDiffer>
    <experiments>8</experiments>
</comment>
<comment type="interaction">
    <interactant intactId="EBI-741355">
        <id>Q96LR2</id>
    </interactant>
    <interactant intactId="EBI-740727">
        <id>Q8TAU3</id>
        <label>ZNF417</label>
    </interactant>
    <organismsDiffer>false</organismsDiffer>
    <experiments>3</experiments>
</comment>
<comment type="subcellular location">
    <subcellularLocation>
        <location evidence="4">Cytoplasm</location>
    </subcellularLocation>
</comment>
<dbReference type="EMBL" id="AK057892">
    <property type="protein sequence ID" value="BAB71608.1"/>
    <property type="molecule type" value="mRNA"/>
</dbReference>
<dbReference type="EMBL" id="AL672043">
    <property type="status" value="NOT_ANNOTATED_CDS"/>
    <property type="molecule type" value="Genomic_DNA"/>
</dbReference>
<dbReference type="EMBL" id="BC034422">
    <property type="protein sequence ID" value="AAH34422.1"/>
    <property type="molecule type" value="mRNA"/>
</dbReference>
<dbReference type="CCDS" id="CCDS30703.1"/>
<dbReference type="RefSeq" id="NP_001013633.1">
    <property type="nucleotide sequence ID" value="NM_001013615.3"/>
</dbReference>
<dbReference type="RefSeq" id="XP_054193075.1">
    <property type="nucleotide sequence ID" value="XM_054337100.1"/>
</dbReference>
<dbReference type="SMR" id="Q96LR2"/>
<dbReference type="BioGRID" id="139071">
    <property type="interactions" value="242"/>
</dbReference>
<dbReference type="FunCoup" id="Q96LR2">
    <property type="interactions" value="1071"/>
</dbReference>
<dbReference type="IntAct" id="Q96LR2">
    <property type="interactions" value="139"/>
</dbReference>
<dbReference type="STRING" id="9606.ENSP00000361048"/>
<dbReference type="iPTMnet" id="Q96LR2"/>
<dbReference type="PhosphoSitePlus" id="Q96LR2"/>
<dbReference type="BioMuta" id="LURAP1"/>
<dbReference type="DMDM" id="74752014"/>
<dbReference type="MassIVE" id="Q96LR2"/>
<dbReference type="PaxDb" id="9606-ENSP00000361048"/>
<dbReference type="PeptideAtlas" id="Q96LR2"/>
<dbReference type="ProteomicsDB" id="77237"/>
<dbReference type="Antibodypedia" id="32773">
    <property type="antibodies" value="64 antibodies from 13 providers"/>
</dbReference>
<dbReference type="DNASU" id="541468"/>
<dbReference type="Ensembl" id="ENST00000371980.4">
    <property type="protein sequence ID" value="ENSP00000361048.3"/>
    <property type="gene ID" value="ENSG00000171357.6"/>
</dbReference>
<dbReference type="GeneID" id="541468"/>
<dbReference type="KEGG" id="hsa:541468"/>
<dbReference type="MANE-Select" id="ENST00000371980.4">
    <property type="protein sequence ID" value="ENSP00000361048.3"/>
    <property type="RefSeq nucleotide sequence ID" value="NM_001013615.3"/>
    <property type="RefSeq protein sequence ID" value="NP_001013633.1"/>
</dbReference>
<dbReference type="UCSC" id="uc010oma.3">
    <property type="organism name" value="human"/>
</dbReference>
<dbReference type="AGR" id="HGNC:32327"/>
<dbReference type="CTD" id="541468"/>
<dbReference type="DisGeNET" id="541468"/>
<dbReference type="GeneCards" id="LURAP1"/>
<dbReference type="HGNC" id="HGNC:32327">
    <property type="gene designation" value="LURAP1"/>
</dbReference>
<dbReference type="HPA" id="ENSG00000171357">
    <property type="expression patterns" value="Low tissue specificity"/>
</dbReference>
<dbReference type="MIM" id="616129">
    <property type="type" value="gene"/>
</dbReference>
<dbReference type="neXtProt" id="NX_Q96LR2"/>
<dbReference type="OpenTargets" id="ENSG00000171357"/>
<dbReference type="PharmGKB" id="PA142672401"/>
<dbReference type="VEuPathDB" id="HostDB:ENSG00000171357"/>
<dbReference type="eggNOG" id="ENOG502QQFH">
    <property type="taxonomic scope" value="Eukaryota"/>
</dbReference>
<dbReference type="GeneTree" id="ENSGT00530000063790"/>
<dbReference type="HOGENOM" id="CLU_066656_1_0_1"/>
<dbReference type="InParanoid" id="Q96LR2"/>
<dbReference type="OMA" id="PCPEMDW"/>
<dbReference type="OrthoDB" id="8911462at2759"/>
<dbReference type="PAN-GO" id="Q96LR2">
    <property type="GO annotations" value="2 GO annotations based on evolutionary models"/>
</dbReference>
<dbReference type="PhylomeDB" id="Q96LR2"/>
<dbReference type="TreeFam" id="TF332089"/>
<dbReference type="PathwayCommons" id="Q96LR2"/>
<dbReference type="SignaLink" id="Q96LR2"/>
<dbReference type="BioGRID-ORCS" id="541468">
    <property type="hits" value="33 hits in 1139 CRISPR screens"/>
</dbReference>
<dbReference type="GenomeRNAi" id="541468"/>
<dbReference type="Pharos" id="Q96LR2">
    <property type="development level" value="Tdark"/>
</dbReference>
<dbReference type="PRO" id="PR:Q96LR2"/>
<dbReference type="Proteomes" id="UP000005640">
    <property type="component" value="Chromosome 1"/>
</dbReference>
<dbReference type="RNAct" id="Q96LR2">
    <property type="molecule type" value="protein"/>
</dbReference>
<dbReference type="Bgee" id="ENSG00000171357">
    <property type="expression patterns" value="Expressed in C1 segment of cervical spinal cord and 109 other cell types or tissues"/>
</dbReference>
<dbReference type="GO" id="GO:0005737">
    <property type="term" value="C:cytoplasm"/>
    <property type="evidence" value="ECO:0000314"/>
    <property type="project" value="UniProtKB"/>
</dbReference>
<dbReference type="GO" id="GO:0005829">
    <property type="term" value="C:cytosol"/>
    <property type="evidence" value="ECO:0000314"/>
    <property type="project" value="HPA"/>
</dbReference>
<dbReference type="GO" id="GO:0043231">
    <property type="term" value="C:intracellular membrane-bounded organelle"/>
    <property type="evidence" value="ECO:0000314"/>
    <property type="project" value="HPA"/>
</dbReference>
<dbReference type="GO" id="GO:0043123">
    <property type="term" value="P:positive regulation of canonical NF-kappaB signal transduction"/>
    <property type="evidence" value="ECO:0000314"/>
    <property type="project" value="UniProtKB"/>
</dbReference>
<dbReference type="GO" id="GO:0001819">
    <property type="term" value="P:positive regulation of cytokine production"/>
    <property type="evidence" value="ECO:0000314"/>
    <property type="project" value="UniProtKB"/>
</dbReference>
<dbReference type="InterPro" id="IPR039499">
    <property type="entry name" value="LURA1/LRA25"/>
</dbReference>
<dbReference type="InterPro" id="IPR037443">
    <property type="entry name" value="LURAP1"/>
</dbReference>
<dbReference type="PANTHER" id="PTHR33767:SF2">
    <property type="entry name" value="LEUCINE RICH ADAPTOR PROTEIN 1"/>
    <property type="match status" value="1"/>
</dbReference>
<dbReference type="PANTHER" id="PTHR33767">
    <property type="entry name" value="LEUCINE RICH ADAPTOR PROTEIN 1-LIKE"/>
    <property type="match status" value="1"/>
</dbReference>
<dbReference type="Pfam" id="PF14854">
    <property type="entry name" value="LURAP"/>
    <property type="match status" value="1"/>
</dbReference>
<sequence>MEGTVESQTPDLRDVEGKVGRKTPEGLLRGLRGECELGTSGALLLPGASSTGHDLGDKIMALKMELAYLRAIDVKILQQLVTLNEGIEAVRWLLEERGTLTSHCSSLTSSQYSLTGGSPGRSRRGSWDSLPDTSTTDRLDSVSIGSFLDTVAPSELDEQGPPGAPRSEMDWAKVIAGGERARTEVDVAATRLGSLRAVWKPPGERLQGGPPESPEDESAKLGFEAHWFWEQCQDDVTFL</sequence>
<name>LURA1_HUMAN</name>